<sequence>MESTTLSKPFKNQVNPWGPLIVLLILGRVNPVALGNSPHQVFNLSWEVTNEDRETVWAITGNHPLWTWWPDLTPDLCMLALHGPSYWGLEYQAPFSPPPGPPCCSRSSGSTPGCSRDCEEPLTSYTPRCNTAWNRLKLSKVTHAHNEGFYVCPGPHRPRWARSCGGPESFYCASWGCETTGRASWKPSSSWDYITVSNNLTSGQATPVCKNNTWCNSLTIRFTSLGKQATSWVTGHWWGLRLYVSGHDPGLIFGIRLKITDSGPRVPIGPNPVLSDQRPPSQPRSPPHSNSTPTETPLTLPEPPPAGVENRLLNLVKGAYQALNLTSPDRTQECWLCLVSGPPYYEGVAVLGTYSNHTSAPANCSVASQHKLTLSEVTGRGLCVGAVPKTHQALCNTTQNTSGGSYYLAAPAGTIWACNTGLTPCLSTTVLNLTTDYCVLVELWPRVTYHSPSYVYHQFEGRAKYKREPVSLTLALLLGGLTMGGIAAGVGTGTTALVATQQLQAAVHDDLKEVEKSITNLEKSLTSLSEVVLQNRRGLDLLFLKEGGLCAALKEECCFYADHTGVVRDSMAKLRERLNQRQKLFESGQGWFERLFNGSPWFTTLISTIMGPLIVLLLILLLGPCILNRLVQFVKDRISVVQALVLTQQYHQLKSIDPEEMESRE</sequence>
<name>ENV_MLVRK</name>
<accession>P31794</accession>
<organismHost>
    <name type="scientific">Mus musculus</name>
    <name type="common">Mouse</name>
    <dbReference type="NCBI Taxonomy" id="10090"/>
</organismHost>
<comment type="function">
    <text evidence="1">The surface protein (SU) attaches the virus to the host cell by binding to its receptor. This interaction triggers the refolding of the transmembrane protein (TM) and is thought to activate its fusogenic potential by unmasking its fusion peptide. Fusion occurs at the host cell plasma membrane (By similarity).</text>
</comment>
<comment type="function">
    <text evidence="1">The transmembrane protein (TM) acts as a class I viral fusion protein. Under the current model, the protein has at least 3 conformational states: pre-fusion native state, pre-hairpin intermediate state, and post-fusion hairpin state. During viral and target cell membrane fusion, the coiled coil regions (heptad repeats) assume a trimer-of-hairpins structure, positioning the fusion peptide in close proximity to the C-terminal region of the ectodomain. The formation of this structure appears to drive apposition and subsequent fusion of viral and target cell membranes. Membranes fusion leads to delivery of the nucleocapsid into the cytoplasm (By similarity).</text>
</comment>
<comment type="subunit">
    <text evidence="1">The mature envelope protein (Env) consists of a trimer of SU-TM heterodimers attached by a labile interchain disulfide bond.</text>
</comment>
<comment type="subcellular location">
    <molecule>Transmembrane protein</molecule>
    <subcellularLocation>
        <location evidence="1">Virion membrane</location>
        <topology evidence="1">Single-pass type I membrane protein</topology>
    </subcellularLocation>
    <subcellularLocation>
        <location evidence="1">Host cell membrane</location>
        <topology evidence="1">Single-pass type I membrane protein</topology>
    </subcellularLocation>
</comment>
<comment type="subcellular location">
    <molecule>Surface protein</molecule>
    <subcellularLocation>
        <location>Virion membrane</location>
        <topology>Peripheral membrane protein</topology>
    </subcellularLocation>
    <subcellularLocation>
        <location evidence="1">Host cell membrane</location>
        <topology evidence="1">Peripheral membrane protein</topology>
    </subcellularLocation>
    <text evidence="1">The surface protein is not anchored to the viral envelope, but associates with the virion surface through its binding to TM. Both proteins are thought to be concentrated at the site of budding and incorporated into the virions possibly by contacts between the cytoplasmic tail of Env and the N-terminus of Gag (By similarity).</text>
</comment>
<comment type="subcellular location">
    <molecule>R-peptide</molecule>
    <subcellularLocation>
        <location evidence="1">Host cell membrane</location>
        <topology evidence="1">Peripheral membrane protein</topology>
    </subcellularLocation>
    <text evidence="1">The R-peptide is membrane-associated through its palmitate.</text>
</comment>
<comment type="domain">
    <text>The YXXL motif is involved in determining the exact site of viral release at the surface of infected mononuclear cells and promotes endocytosis.</text>
</comment>
<comment type="domain">
    <text evidence="1">The 17 amino acids long immunosuppressive region is present in many retroviral envelope proteins. Synthetic peptides derived from this relatively conserved sequence inhibit immune function in vitro and in vivo (By similarity).</text>
</comment>
<comment type="PTM">
    <text evidence="1">Specific enzymatic cleavages in vivo yield mature proteins. Envelope glycoproteins are synthesized as an inactive precursor that is N-glycosylated and processed likely by host cell furin or by a furin-like protease in the Golgi to yield the mature SU and TM proteins. The cleavage site between SU and TM requires the minimal sequence [KR]-X-[KR]-R. The R-peptide is released from the C-terminus of the cytoplasmic tail of the TM protein upon particle formation as a result of proteolytic cleavage by the viral protease. Cleavage of this peptide is required for TM to become fusogenic (By similarity).</text>
</comment>
<comment type="PTM">
    <text evidence="1">The CXXC motif is highly conserved across a broad range of retroviral envelope proteins. It is thought to participate in the formation of a labile disulfide bond possibly with the CX6CC motif present in the transmembrane protein. Isomerization of the intersubunit disulfide bond to an SU intrachain disulfide bond is thought to occur upon receptor recognition in order to allow membrane fusion (By similarity).</text>
</comment>
<comment type="PTM">
    <text evidence="1">The transmembrane protein is palmitoylated.</text>
</comment>
<comment type="PTM">
    <text evidence="1">The R-peptide is palmitoylated.</text>
</comment>
<proteinExistence type="evidence at protein level"/>
<dbReference type="EMBL" id="M93052">
    <property type="protein sequence ID" value="AAA46526.1"/>
    <property type="molecule type" value="Genomic_DNA"/>
</dbReference>
<dbReference type="PIR" id="B42743">
    <property type="entry name" value="VCMVKA"/>
</dbReference>
<dbReference type="SMR" id="P31794"/>
<dbReference type="GlyCosmos" id="P31794">
    <property type="glycosylation" value="9 sites, No reported glycans"/>
</dbReference>
<dbReference type="GO" id="GO:0020002">
    <property type="term" value="C:host cell plasma membrane"/>
    <property type="evidence" value="ECO:0007669"/>
    <property type="project" value="UniProtKB-SubCell"/>
</dbReference>
<dbReference type="GO" id="GO:0016020">
    <property type="term" value="C:membrane"/>
    <property type="evidence" value="ECO:0007669"/>
    <property type="project" value="UniProtKB-KW"/>
</dbReference>
<dbReference type="GO" id="GO:0019031">
    <property type="term" value="C:viral envelope"/>
    <property type="evidence" value="ECO:0007669"/>
    <property type="project" value="UniProtKB-KW"/>
</dbReference>
<dbReference type="GO" id="GO:0055036">
    <property type="term" value="C:virion membrane"/>
    <property type="evidence" value="ECO:0007669"/>
    <property type="project" value="UniProtKB-SubCell"/>
</dbReference>
<dbReference type="GO" id="GO:0046872">
    <property type="term" value="F:metal ion binding"/>
    <property type="evidence" value="ECO:0007669"/>
    <property type="project" value="UniProtKB-KW"/>
</dbReference>
<dbReference type="GO" id="GO:0019064">
    <property type="term" value="P:fusion of virus membrane with host plasma membrane"/>
    <property type="evidence" value="ECO:0007669"/>
    <property type="project" value="UniProtKB-KW"/>
</dbReference>
<dbReference type="GO" id="GO:0046718">
    <property type="term" value="P:symbiont entry into host cell"/>
    <property type="evidence" value="ECO:0007669"/>
    <property type="project" value="UniProtKB-KW"/>
</dbReference>
<dbReference type="GO" id="GO:0019062">
    <property type="term" value="P:virion attachment to host cell"/>
    <property type="evidence" value="ECO:0007669"/>
    <property type="project" value="UniProtKB-KW"/>
</dbReference>
<dbReference type="CDD" id="cd09851">
    <property type="entry name" value="HTLV-1-like_HR1-HR2"/>
    <property type="match status" value="1"/>
</dbReference>
<dbReference type="Gene3D" id="1.10.287.210">
    <property type="match status" value="1"/>
</dbReference>
<dbReference type="Gene3D" id="3.90.310.10">
    <property type="entry name" value="ENV polyprotein, receptor-binding domain"/>
    <property type="match status" value="1"/>
</dbReference>
<dbReference type="InterPro" id="IPR008981">
    <property type="entry name" value="FMuLV_rcpt-bd"/>
</dbReference>
<dbReference type="InterPro" id="IPR018154">
    <property type="entry name" value="TLV/ENV_coat_polyprotein"/>
</dbReference>
<dbReference type="PANTHER" id="PTHR10424:SF72">
    <property type="entry name" value="BC035947 PROTEIN-RELATED"/>
    <property type="match status" value="1"/>
</dbReference>
<dbReference type="PANTHER" id="PTHR10424">
    <property type="entry name" value="VIRAL ENVELOPE PROTEIN"/>
    <property type="match status" value="1"/>
</dbReference>
<dbReference type="Pfam" id="PF00429">
    <property type="entry name" value="TLV_coat"/>
    <property type="match status" value="1"/>
</dbReference>
<dbReference type="SUPFAM" id="SSF49830">
    <property type="entry name" value="ENV polyprotein, receptor-binding domain"/>
    <property type="match status" value="1"/>
</dbReference>
<dbReference type="SUPFAM" id="SSF58069">
    <property type="entry name" value="Virus ectodomain"/>
    <property type="match status" value="1"/>
</dbReference>
<reference key="1">
    <citation type="journal article" date="1992" name="J. Virol.">
        <title>Determinants of thymotropism in Kaplan radiation leukemia virus and nucleotide sequence of its envelope region.</title>
        <authorList>
            <person name="Poliquin L."/>
            <person name="Bergeron D."/>
            <person name="Fortier J.L."/>
            <person name="Paquette Y."/>
            <person name="Bergeron R."/>
            <person name="Rassart E."/>
        </authorList>
    </citation>
    <scope>NUCLEOTIDE SEQUENCE [GENOMIC DNA]</scope>
</reference>
<keyword id="KW-0165">Cleavage on pair of basic residues</keyword>
<keyword id="KW-0175">Coiled coil</keyword>
<keyword id="KW-1015">Disulfide bond</keyword>
<keyword id="KW-1169">Fusion of virus membrane with host cell membrane</keyword>
<keyword id="KW-1168">Fusion of virus membrane with host membrane</keyword>
<keyword id="KW-0325">Glycoprotein</keyword>
<keyword id="KW-1032">Host cell membrane</keyword>
<keyword id="KW-1043">Host membrane</keyword>
<keyword id="KW-0945">Host-virus interaction</keyword>
<keyword id="KW-0449">Lipoprotein</keyword>
<keyword id="KW-0472">Membrane</keyword>
<keyword id="KW-0479">Metal-binding</keyword>
<keyword id="KW-0564">Palmitate</keyword>
<keyword id="KW-0732">Signal</keyword>
<keyword id="KW-0812">Transmembrane</keyword>
<keyword id="KW-1133">Transmembrane helix</keyword>
<keyword id="KW-1161">Viral attachment to host cell</keyword>
<keyword id="KW-0261">Viral envelope protein</keyword>
<keyword id="KW-1162">Viral penetration into host cytoplasm</keyword>
<keyword id="KW-0946">Virion</keyword>
<keyword id="KW-1160">Virus entry into host cell</keyword>
<keyword id="KW-0862">Zinc</keyword>
<protein>
    <recommendedName>
        <fullName>Envelope glycoprotein</fullName>
    </recommendedName>
    <alternativeName>
        <fullName>Env polyprotein</fullName>
    </alternativeName>
    <component>
        <recommendedName>
            <fullName>Surface protein</fullName>
            <shortName>SU</shortName>
        </recommendedName>
        <alternativeName>
            <fullName>Glycoprotein 76</fullName>
            <shortName>gp76</shortName>
        </alternativeName>
    </component>
    <component>
        <recommendedName>
            <fullName>Transmembrane protein</fullName>
            <shortName>TM</shortName>
        </recommendedName>
        <alternativeName>
            <fullName>Envelope protein p15E</fullName>
        </alternativeName>
    </component>
    <component>
        <recommendedName>
            <fullName>R-peptide</fullName>
        </recommendedName>
        <alternativeName>
            <fullName>p2E</fullName>
        </alternativeName>
    </component>
</protein>
<gene>
    <name type="primary">env</name>
</gene>
<organism>
    <name type="scientific">Radiation murine leukemia virus (strain Kaplan)</name>
    <dbReference type="NCBI Taxonomy" id="31689"/>
    <lineage>
        <taxon>Viruses</taxon>
        <taxon>Riboviria</taxon>
        <taxon>Pararnavirae</taxon>
        <taxon>Artverviricota</taxon>
        <taxon>Revtraviricetes</taxon>
        <taxon>Ortervirales</taxon>
        <taxon>Retroviridae</taxon>
        <taxon>Orthoretrovirinae</taxon>
        <taxon>Gammaretrovirus</taxon>
        <taxon>Murine leukemia virus</taxon>
    </lineage>
</organism>
<evidence type="ECO:0000250" key="1"/>
<evidence type="ECO:0000255" key="2"/>
<evidence type="ECO:0000256" key="3">
    <source>
        <dbReference type="SAM" id="MobiDB-lite"/>
    </source>
</evidence>
<feature type="signal peptide" evidence="2">
    <location>
        <begin position="1"/>
        <end position="31"/>
    </location>
</feature>
<feature type="chain" id="PRO_0000239589" description="Envelope glycoprotein">
    <location>
        <begin position="32"/>
        <end position="665"/>
    </location>
</feature>
<feature type="chain" id="PRO_0000040768" description="Surface protein" evidence="1">
    <location>
        <begin position="32"/>
        <end position="467"/>
    </location>
</feature>
<feature type="chain" id="PRO_0000040769" description="Transmembrane protein" evidence="1">
    <location>
        <begin position="468"/>
        <end position="644"/>
    </location>
</feature>
<feature type="peptide" id="PRO_0000040770" description="R-peptide" evidence="1">
    <location>
        <begin position="645"/>
        <end position="665"/>
    </location>
</feature>
<feature type="topological domain" description="Extracellular" evidence="2">
    <location>
        <begin position="32"/>
        <end position="605"/>
    </location>
</feature>
<feature type="transmembrane region" description="Helical" evidence="2">
    <location>
        <begin position="606"/>
        <end position="626"/>
    </location>
</feature>
<feature type="topological domain" description="Cytoplasmic" evidence="2">
    <location>
        <begin position="627"/>
        <end position="665"/>
    </location>
</feature>
<feature type="region of interest" description="Receptor-binding domain (RBD)" evidence="2">
    <location>
        <begin position="32"/>
        <end position="267"/>
    </location>
</feature>
<feature type="region of interest" description="Disordered" evidence="3">
    <location>
        <begin position="266"/>
        <end position="307"/>
    </location>
</feature>
<feature type="region of interest" description="Fusion peptide" evidence="1">
    <location>
        <begin position="470"/>
        <end position="490"/>
    </location>
</feature>
<feature type="region of interest" description="Immunosuppression" evidence="1">
    <location>
        <begin position="533"/>
        <end position="549"/>
    </location>
</feature>
<feature type="coiled-coil region" evidence="2">
    <location>
        <begin position="505"/>
        <end position="532"/>
    </location>
</feature>
<feature type="short sequence motif" description="CXXC">
    <location>
        <begin position="334"/>
        <end position="337"/>
    </location>
</feature>
<feature type="short sequence motif" description="CX6CC">
    <location>
        <begin position="550"/>
        <end position="558"/>
    </location>
</feature>
<feature type="short sequence motif" description="YXXL motif; contains endocytosis signal" evidence="1">
    <location>
        <begin position="650"/>
        <end position="653"/>
    </location>
</feature>
<feature type="binding site" evidence="1">
    <location>
        <position position="117"/>
    </location>
    <ligand>
        <name>Zn(2+)</name>
        <dbReference type="ChEBI" id="CHEBI:29105"/>
    </ligand>
</feature>
<feature type="site" description="Cleavage; by host" evidence="1">
    <location>
        <begin position="467"/>
        <end position="468"/>
    </location>
</feature>
<feature type="site" description="Cleavage; by viral protease p14" evidence="1">
    <location>
        <begin position="644"/>
        <end position="645"/>
    </location>
</feature>
<feature type="lipid moiety-binding region" description="S-palmitoyl cysteine; by host" evidence="1">
    <location>
        <position position="625"/>
    </location>
</feature>
<feature type="glycosylation site" description="N-linked (GlcNAc...) asparagine; by host" evidence="1">
    <location>
        <position position="43"/>
    </location>
</feature>
<feature type="glycosylation site" description="N-linked (GlcNAc...) asparagine; by host" evidence="1">
    <location>
        <position position="199"/>
    </location>
</feature>
<feature type="glycosylation site" description="N-linked (GlcNAc...) asparagine; by host" evidence="2">
    <location>
        <position position="211"/>
    </location>
</feature>
<feature type="glycosylation site" description="N-linked (GlcNAc...) asparagine; by host" evidence="1">
    <location>
        <position position="324"/>
    </location>
</feature>
<feature type="glycosylation site" description="N-linked (GlcNAc...) asparagine; by host" evidence="2">
    <location>
        <position position="356"/>
    </location>
</feature>
<feature type="glycosylation site" description="N-linked (GlcNAc...) asparagine; by host" evidence="2">
    <location>
        <position position="363"/>
    </location>
</feature>
<feature type="glycosylation site" description="N-linked (GlcNAc...) asparagine; by host" evidence="2">
    <location>
        <position position="396"/>
    </location>
</feature>
<feature type="glycosylation site" description="N-linked (GlcNAc...) asparagine; by host" evidence="2">
    <location>
        <position position="400"/>
    </location>
</feature>
<feature type="glycosylation site" description="N-linked (GlcNAc...) asparagine; by host" evidence="2">
    <location>
        <position position="432"/>
    </location>
</feature>
<feature type="disulfide bond" evidence="1">
    <location>
        <begin position="77"/>
        <end position="129"/>
    </location>
</feature>
<feature type="disulfide bond" evidence="1">
    <location>
        <begin position="103"/>
        <end position="118"/>
    </location>
</feature>
<feature type="disulfide bond" evidence="1">
    <location>
        <begin position="104"/>
        <end position="114"/>
    </location>
</feature>
<feature type="disulfide bond" evidence="1">
    <location>
        <begin position="152"/>
        <end position="172"/>
    </location>
</feature>
<feature type="disulfide bond" evidence="1">
    <location>
        <begin position="164"/>
        <end position="177"/>
    </location>
</feature>
<feature type="disulfide bond" evidence="1">
    <location>
        <begin position="209"/>
        <end position="215"/>
    </location>
</feature>
<feature type="disulfide bond" description="Interchain (between SU and TM chains, or C-337 with C-558); in linked form">
    <location>
        <begin position="334"/>
        <end position="558"/>
    </location>
</feature>
<feature type="disulfide bond">
    <location>
        <begin position="334"/>
        <end position="337"/>
    </location>
</feature>
<feature type="disulfide bond" evidence="1">
    <location>
        <begin position="364"/>
        <end position="418"/>
    </location>
</feature>
<feature type="disulfide bond" evidence="1">
    <location>
        <begin position="383"/>
        <end position="395"/>
    </location>
</feature>
<feature type="disulfide bond" evidence="1">
    <location>
        <begin position="425"/>
        <end position="438"/>
    </location>
</feature>
<feature type="disulfide bond" evidence="1">
    <location>
        <begin position="550"/>
        <end position="557"/>
    </location>
</feature>